<sequence length="380" mass="43054">MAMNIRKTHPLIKIVNNSLIDLPTPSNISIWWNFGSLLGLCLIIQILTGLFLAMHYTADISSAFSSVAHICRDVNYGWLIRNTHANGASMFFICVYLHIARGLYYGSYLNKETWNIGVIILLLLMATAFVGYVLPWGQMSFWGATVITNLLSALPYIGDMLVQWIWGGFSVDSATLTRFFTFHFLLPFVIVALTMVHLLFLHEAGSNNPTGLISNMDKIPFHPYYSYKDLLGFFILLFFLTFLALFTPNLLTDAENFIPANPLVTPPHIKPEWYFLFAYAILRSIPNKLGGVLALAFSILILLLVPILHTSKQRSLTFRPISQLLFWLLVANTIILTWIGGQPVEQPFITIGQIASITYFSFFLILFPIAGWWENKMLNL</sequence>
<feature type="chain" id="PRO_0000061361" description="Cytochrome b">
    <location>
        <begin position="1"/>
        <end position="380"/>
    </location>
</feature>
<feature type="transmembrane region" description="Helical" evidence="2">
    <location>
        <begin position="34"/>
        <end position="54"/>
    </location>
</feature>
<feature type="transmembrane region" description="Helical" evidence="2">
    <location>
        <begin position="78"/>
        <end position="99"/>
    </location>
</feature>
<feature type="transmembrane region" description="Helical" evidence="2">
    <location>
        <begin position="114"/>
        <end position="134"/>
    </location>
</feature>
<feature type="transmembrane region" description="Helical" evidence="2">
    <location>
        <begin position="179"/>
        <end position="199"/>
    </location>
</feature>
<feature type="transmembrane region" description="Helical" evidence="2">
    <location>
        <begin position="227"/>
        <end position="247"/>
    </location>
</feature>
<feature type="transmembrane region" description="Helical" evidence="2">
    <location>
        <begin position="289"/>
        <end position="309"/>
    </location>
</feature>
<feature type="transmembrane region" description="Helical" evidence="2">
    <location>
        <begin position="321"/>
        <end position="341"/>
    </location>
</feature>
<feature type="transmembrane region" description="Helical" evidence="2">
    <location>
        <begin position="348"/>
        <end position="368"/>
    </location>
</feature>
<feature type="binding site" description="axial binding residue" evidence="2">
    <location>
        <position position="84"/>
    </location>
    <ligand>
        <name>heme b</name>
        <dbReference type="ChEBI" id="CHEBI:60344"/>
        <label>b562</label>
    </ligand>
    <ligandPart>
        <name>Fe</name>
        <dbReference type="ChEBI" id="CHEBI:18248"/>
    </ligandPart>
</feature>
<feature type="binding site" description="axial binding residue" evidence="2">
    <location>
        <position position="98"/>
    </location>
    <ligand>
        <name>heme b</name>
        <dbReference type="ChEBI" id="CHEBI:60344"/>
        <label>b566</label>
    </ligand>
    <ligandPart>
        <name>Fe</name>
        <dbReference type="ChEBI" id="CHEBI:18248"/>
    </ligandPart>
</feature>
<feature type="binding site" description="axial binding residue" evidence="2">
    <location>
        <position position="183"/>
    </location>
    <ligand>
        <name>heme b</name>
        <dbReference type="ChEBI" id="CHEBI:60344"/>
        <label>b562</label>
    </ligand>
    <ligandPart>
        <name>Fe</name>
        <dbReference type="ChEBI" id="CHEBI:18248"/>
    </ligandPart>
</feature>
<feature type="binding site" description="axial binding residue" evidence="2">
    <location>
        <position position="197"/>
    </location>
    <ligand>
        <name>heme b</name>
        <dbReference type="ChEBI" id="CHEBI:60344"/>
        <label>b566</label>
    </ligand>
    <ligandPart>
        <name>Fe</name>
        <dbReference type="ChEBI" id="CHEBI:18248"/>
    </ligandPart>
</feature>
<feature type="binding site" evidence="2">
    <location>
        <position position="202"/>
    </location>
    <ligand>
        <name>a ubiquinone</name>
        <dbReference type="ChEBI" id="CHEBI:16389"/>
    </ligand>
</feature>
<organism>
    <name type="scientific">Pastinachus sephen</name>
    <name type="common">Cowtail stingray</name>
    <dbReference type="NCBI Taxonomy" id="87138"/>
    <lineage>
        <taxon>Eukaryota</taxon>
        <taxon>Metazoa</taxon>
        <taxon>Chordata</taxon>
        <taxon>Craniata</taxon>
        <taxon>Vertebrata</taxon>
        <taxon>Chondrichthyes</taxon>
        <taxon>Elasmobranchii</taxon>
        <taxon>Batoidea</taxon>
        <taxon>Myliobatiformes</taxon>
        <taxon>Dasyatidae</taxon>
        <taxon>Pastinachus</taxon>
    </lineage>
</organism>
<name>CYB_PASSE</name>
<dbReference type="EMBL" id="AB021500">
    <property type="protein sequence ID" value="BAA78470.1"/>
    <property type="molecule type" value="Genomic_DNA"/>
</dbReference>
<dbReference type="SMR" id="Q9XKK2"/>
<dbReference type="GO" id="GO:0005743">
    <property type="term" value="C:mitochondrial inner membrane"/>
    <property type="evidence" value="ECO:0007669"/>
    <property type="project" value="UniProtKB-SubCell"/>
</dbReference>
<dbReference type="GO" id="GO:0045275">
    <property type="term" value="C:respiratory chain complex III"/>
    <property type="evidence" value="ECO:0007669"/>
    <property type="project" value="InterPro"/>
</dbReference>
<dbReference type="GO" id="GO:0046872">
    <property type="term" value="F:metal ion binding"/>
    <property type="evidence" value="ECO:0007669"/>
    <property type="project" value="UniProtKB-KW"/>
</dbReference>
<dbReference type="GO" id="GO:0008121">
    <property type="term" value="F:ubiquinol-cytochrome-c reductase activity"/>
    <property type="evidence" value="ECO:0007669"/>
    <property type="project" value="InterPro"/>
</dbReference>
<dbReference type="GO" id="GO:0006122">
    <property type="term" value="P:mitochondrial electron transport, ubiquinol to cytochrome c"/>
    <property type="evidence" value="ECO:0007669"/>
    <property type="project" value="TreeGrafter"/>
</dbReference>
<dbReference type="CDD" id="cd00290">
    <property type="entry name" value="cytochrome_b_C"/>
    <property type="match status" value="1"/>
</dbReference>
<dbReference type="CDD" id="cd00284">
    <property type="entry name" value="Cytochrome_b_N"/>
    <property type="match status" value="1"/>
</dbReference>
<dbReference type="FunFam" id="1.20.810.10:FF:000002">
    <property type="entry name" value="Cytochrome b"/>
    <property type="match status" value="1"/>
</dbReference>
<dbReference type="Gene3D" id="1.20.810.10">
    <property type="entry name" value="Cytochrome Bc1 Complex, Chain C"/>
    <property type="match status" value="1"/>
</dbReference>
<dbReference type="InterPro" id="IPR005798">
    <property type="entry name" value="Cyt_b/b6_C"/>
</dbReference>
<dbReference type="InterPro" id="IPR036150">
    <property type="entry name" value="Cyt_b/b6_C_sf"/>
</dbReference>
<dbReference type="InterPro" id="IPR005797">
    <property type="entry name" value="Cyt_b/b6_N"/>
</dbReference>
<dbReference type="InterPro" id="IPR027387">
    <property type="entry name" value="Cytb/b6-like_sf"/>
</dbReference>
<dbReference type="InterPro" id="IPR030689">
    <property type="entry name" value="Cytochrome_b"/>
</dbReference>
<dbReference type="InterPro" id="IPR048260">
    <property type="entry name" value="Cytochrome_b_C_euk/bac"/>
</dbReference>
<dbReference type="InterPro" id="IPR048259">
    <property type="entry name" value="Cytochrome_b_N_euk/bac"/>
</dbReference>
<dbReference type="InterPro" id="IPR016174">
    <property type="entry name" value="Di-haem_cyt_TM"/>
</dbReference>
<dbReference type="PANTHER" id="PTHR19271">
    <property type="entry name" value="CYTOCHROME B"/>
    <property type="match status" value="1"/>
</dbReference>
<dbReference type="PANTHER" id="PTHR19271:SF16">
    <property type="entry name" value="CYTOCHROME B"/>
    <property type="match status" value="1"/>
</dbReference>
<dbReference type="Pfam" id="PF00032">
    <property type="entry name" value="Cytochrom_B_C"/>
    <property type="match status" value="1"/>
</dbReference>
<dbReference type="Pfam" id="PF00033">
    <property type="entry name" value="Cytochrome_B"/>
    <property type="match status" value="1"/>
</dbReference>
<dbReference type="PIRSF" id="PIRSF038885">
    <property type="entry name" value="COB"/>
    <property type="match status" value="1"/>
</dbReference>
<dbReference type="SUPFAM" id="SSF81648">
    <property type="entry name" value="a domain/subunit of cytochrome bc1 complex (Ubiquinol-cytochrome c reductase)"/>
    <property type="match status" value="1"/>
</dbReference>
<dbReference type="SUPFAM" id="SSF81342">
    <property type="entry name" value="Transmembrane di-heme cytochromes"/>
    <property type="match status" value="1"/>
</dbReference>
<dbReference type="PROSITE" id="PS51003">
    <property type="entry name" value="CYTB_CTER"/>
    <property type="match status" value="1"/>
</dbReference>
<dbReference type="PROSITE" id="PS51002">
    <property type="entry name" value="CYTB_NTER"/>
    <property type="match status" value="1"/>
</dbReference>
<geneLocation type="mitochondrion"/>
<accession>Q9XKK2</accession>
<proteinExistence type="inferred from homology"/>
<comment type="function">
    <text evidence="2">Component of the ubiquinol-cytochrome c reductase complex (complex III or cytochrome b-c1 complex) that is part of the mitochondrial respiratory chain. The b-c1 complex mediates electron transfer from ubiquinol to cytochrome c. Contributes to the generation of a proton gradient across the mitochondrial membrane that is then used for ATP synthesis.</text>
</comment>
<comment type="cofactor">
    <cofactor evidence="2">
        <name>heme b</name>
        <dbReference type="ChEBI" id="CHEBI:60344"/>
    </cofactor>
    <text evidence="2">Binds 2 heme b groups non-covalently.</text>
</comment>
<comment type="subunit">
    <text evidence="2">The cytochrome bc1 complex contains 3 respiratory subunits (MT-CYB, CYC1 and UQCRFS1), 2 core proteins (UQCRC1 and UQCRC2) and probably 6 low-molecular weight proteins.</text>
</comment>
<comment type="subcellular location">
    <subcellularLocation>
        <location evidence="2">Mitochondrion inner membrane</location>
        <topology evidence="2">Multi-pass membrane protein</topology>
    </subcellularLocation>
</comment>
<comment type="miscellaneous">
    <text evidence="1">Heme 1 (or BL or b562) is low-potential and absorbs at about 562 nm, and heme 2 (or BH or b566) is high-potential and absorbs at about 566 nm.</text>
</comment>
<comment type="similarity">
    <text evidence="3 4">Belongs to the cytochrome b family.</text>
</comment>
<comment type="caution">
    <text evidence="2">The full-length protein contains only eight transmembrane helices, not nine as predicted by bioinformatics tools.</text>
</comment>
<protein>
    <recommendedName>
        <fullName>Cytochrome b</fullName>
    </recommendedName>
    <alternativeName>
        <fullName>Complex III subunit 3</fullName>
    </alternativeName>
    <alternativeName>
        <fullName>Complex III subunit III</fullName>
    </alternativeName>
    <alternativeName>
        <fullName>Cytochrome b-c1 complex subunit 3</fullName>
    </alternativeName>
    <alternativeName>
        <fullName>Ubiquinol-cytochrome-c reductase complex cytochrome b subunit</fullName>
    </alternativeName>
</protein>
<keyword id="KW-0249">Electron transport</keyword>
<keyword id="KW-0349">Heme</keyword>
<keyword id="KW-0408">Iron</keyword>
<keyword id="KW-0472">Membrane</keyword>
<keyword id="KW-0479">Metal-binding</keyword>
<keyword id="KW-0496">Mitochondrion</keyword>
<keyword id="KW-0999">Mitochondrion inner membrane</keyword>
<keyword id="KW-0679">Respiratory chain</keyword>
<keyword id="KW-0812">Transmembrane</keyword>
<keyword id="KW-1133">Transmembrane helix</keyword>
<keyword id="KW-0813">Transport</keyword>
<keyword id="KW-0830">Ubiquinone</keyword>
<evidence type="ECO:0000250" key="1"/>
<evidence type="ECO:0000250" key="2">
    <source>
        <dbReference type="UniProtKB" id="P00157"/>
    </source>
</evidence>
<evidence type="ECO:0000255" key="3">
    <source>
        <dbReference type="PROSITE-ProRule" id="PRU00967"/>
    </source>
</evidence>
<evidence type="ECO:0000255" key="4">
    <source>
        <dbReference type="PROSITE-ProRule" id="PRU00968"/>
    </source>
</evidence>
<reference key="1">
    <citation type="journal article" date="1999" name="Fish. Sci.">
        <title>Molecular phylogeny of Asian freshwater and marine stingrays based on the DNA nucleotide and deduced amino acid sequences of the cytochrome b gene.</title>
        <authorList>
            <person name="Sezaki K."/>
            <person name="Begum R.A."/>
            <person name="Wongrat P."/>
            <person name="Srivastava M.P."/>
            <person name="SriKantha S."/>
            <person name="Kikuchi K."/>
            <person name="Ishihara H."/>
            <person name="Tanaka S."/>
            <person name="Taniuchi T."/>
            <person name="Watabe S."/>
        </authorList>
    </citation>
    <scope>NUCLEOTIDE SEQUENCE [GENOMIC DNA]</scope>
</reference>
<gene>
    <name type="primary">mt-cyb</name>
    <name type="synonym">cob</name>
    <name type="synonym">cytb</name>
    <name type="synonym">mtcyb</name>
</gene>